<name>MIAB_YERPP</name>
<keyword id="KW-0004">4Fe-4S</keyword>
<keyword id="KW-0963">Cytoplasm</keyword>
<keyword id="KW-0408">Iron</keyword>
<keyword id="KW-0411">Iron-sulfur</keyword>
<keyword id="KW-0479">Metal-binding</keyword>
<keyword id="KW-0949">S-adenosyl-L-methionine</keyword>
<keyword id="KW-0808">Transferase</keyword>
<keyword id="KW-0819">tRNA processing</keyword>
<feature type="chain" id="PRO_0000374656" description="tRNA-2-methylthio-N(6)-dimethylallyladenosine synthase">
    <location>
        <begin position="1"/>
        <end position="474"/>
    </location>
</feature>
<feature type="domain" description="MTTase N-terminal" evidence="1">
    <location>
        <begin position="3"/>
        <end position="120"/>
    </location>
</feature>
<feature type="domain" description="Radical SAM core" evidence="2">
    <location>
        <begin position="143"/>
        <end position="375"/>
    </location>
</feature>
<feature type="domain" description="TRAM" evidence="1">
    <location>
        <begin position="378"/>
        <end position="441"/>
    </location>
</feature>
<feature type="binding site" evidence="1">
    <location>
        <position position="12"/>
    </location>
    <ligand>
        <name>[4Fe-4S] cluster</name>
        <dbReference type="ChEBI" id="CHEBI:49883"/>
        <label>1</label>
    </ligand>
</feature>
<feature type="binding site" evidence="1">
    <location>
        <position position="49"/>
    </location>
    <ligand>
        <name>[4Fe-4S] cluster</name>
        <dbReference type="ChEBI" id="CHEBI:49883"/>
        <label>1</label>
    </ligand>
</feature>
<feature type="binding site" evidence="1">
    <location>
        <position position="83"/>
    </location>
    <ligand>
        <name>[4Fe-4S] cluster</name>
        <dbReference type="ChEBI" id="CHEBI:49883"/>
        <label>1</label>
    </ligand>
</feature>
<feature type="binding site" evidence="1">
    <location>
        <position position="157"/>
    </location>
    <ligand>
        <name>[4Fe-4S] cluster</name>
        <dbReference type="ChEBI" id="CHEBI:49883"/>
        <label>2</label>
        <note>4Fe-4S-S-AdoMet</note>
    </ligand>
</feature>
<feature type="binding site" evidence="1">
    <location>
        <position position="161"/>
    </location>
    <ligand>
        <name>[4Fe-4S] cluster</name>
        <dbReference type="ChEBI" id="CHEBI:49883"/>
        <label>2</label>
        <note>4Fe-4S-S-AdoMet</note>
    </ligand>
</feature>
<feature type="binding site" evidence="1">
    <location>
        <position position="164"/>
    </location>
    <ligand>
        <name>[4Fe-4S] cluster</name>
        <dbReference type="ChEBI" id="CHEBI:49883"/>
        <label>2</label>
        <note>4Fe-4S-S-AdoMet</note>
    </ligand>
</feature>
<organism>
    <name type="scientific">Yersinia pestis (strain Pestoides F)</name>
    <dbReference type="NCBI Taxonomy" id="386656"/>
    <lineage>
        <taxon>Bacteria</taxon>
        <taxon>Pseudomonadati</taxon>
        <taxon>Pseudomonadota</taxon>
        <taxon>Gammaproteobacteria</taxon>
        <taxon>Enterobacterales</taxon>
        <taxon>Yersiniaceae</taxon>
        <taxon>Yersinia</taxon>
    </lineage>
</organism>
<sequence length="474" mass="53406">MTKKLHIKTWGCQMNEYDSSKMADLLASTHGYQLTTIPEEADLLLLNTCSIREKAQEKVFSLLGQWKLLKEKNPQLIIGVGGCVASQEGEQLRQRAPCVDVIFGPQTLHRLPEMINHVQGTNSPVVDISFPEIEKFDRLPEPRAEGPTAFVSIMEGCNKYCTFCVVPYTRGEEVSRPSDDILFEIAQLAAQGVREVNLLGQNVNAYRGATYDGDICSFAELLRLVAAIDGIDRVRFTTSHPIEFTDDIIDVYRDTPELVSFLHLPVQSGSDRILTMMKRAHTALEYKAIIRKLRQARPDIQISSDFIVGFPGETQQDFEQTMKLVADIHFDTSYSFIYSPRPGTPAADLPDNVSEEEKKQRLHILQQRISQQAMEISRKMVGTVQRVLVEGTSRKNVMELAGRTENNRVVNFEGSPDMIGKFVDVEIVNVYASSLRGILLRTEDQMDLRTHESPQSVIARTRKENEIGVGIYQP</sequence>
<gene>
    <name evidence="1" type="primary">miaB</name>
    <name type="ordered locus">YPDSF_2632</name>
</gene>
<reference key="1">
    <citation type="submission" date="2007-02" db="EMBL/GenBank/DDBJ databases">
        <title>Complete sequence of chromosome of Yersinia pestis Pestoides F.</title>
        <authorList>
            <consortium name="US DOE Joint Genome Institute"/>
            <person name="Copeland A."/>
            <person name="Lucas S."/>
            <person name="Lapidus A."/>
            <person name="Barry K."/>
            <person name="Detter J.C."/>
            <person name="Glavina del Rio T."/>
            <person name="Hammon N."/>
            <person name="Israni S."/>
            <person name="Dalin E."/>
            <person name="Tice H."/>
            <person name="Pitluck S."/>
            <person name="Di Bartolo G."/>
            <person name="Chain P."/>
            <person name="Malfatti S."/>
            <person name="Shin M."/>
            <person name="Vergez L."/>
            <person name="Schmutz J."/>
            <person name="Larimer F."/>
            <person name="Land M."/>
            <person name="Hauser L."/>
            <person name="Worsham P."/>
            <person name="Chu M."/>
            <person name="Bearden S."/>
            <person name="Garcia E."/>
            <person name="Richardson P."/>
        </authorList>
    </citation>
    <scope>NUCLEOTIDE SEQUENCE [LARGE SCALE GENOMIC DNA]</scope>
    <source>
        <strain>Pestoides F</strain>
    </source>
</reference>
<protein>
    <recommendedName>
        <fullName evidence="1">tRNA-2-methylthio-N(6)-dimethylallyladenosine synthase</fullName>
        <ecNumber evidence="1">2.8.4.3</ecNumber>
    </recommendedName>
    <alternativeName>
        <fullName evidence="1">(Dimethylallyl)adenosine tRNA methylthiotransferase MiaB</fullName>
    </alternativeName>
    <alternativeName>
        <fullName evidence="1">tRNA-i(6)A37 methylthiotransferase</fullName>
    </alternativeName>
</protein>
<accession>A4TNY6</accession>
<comment type="function">
    <text evidence="1">Catalyzes the methylthiolation of N6-(dimethylallyl)adenosine (i(6)A), leading to the formation of 2-methylthio-N6-(dimethylallyl)adenosine (ms(2)i(6)A) at position 37 in tRNAs that read codons beginning with uridine.</text>
</comment>
<comment type="catalytic activity">
    <reaction evidence="1">
        <text>N(6)-dimethylallyladenosine(37) in tRNA + (sulfur carrier)-SH + AH2 + 2 S-adenosyl-L-methionine = 2-methylsulfanyl-N(6)-dimethylallyladenosine(37) in tRNA + (sulfur carrier)-H + 5'-deoxyadenosine + L-methionine + A + S-adenosyl-L-homocysteine + 2 H(+)</text>
        <dbReference type="Rhea" id="RHEA:37067"/>
        <dbReference type="Rhea" id="RHEA-COMP:10375"/>
        <dbReference type="Rhea" id="RHEA-COMP:10376"/>
        <dbReference type="Rhea" id="RHEA-COMP:14737"/>
        <dbReference type="Rhea" id="RHEA-COMP:14739"/>
        <dbReference type="ChEBI" id="CHEBI:13193"/>
        <dbReference type="ChEBI" id="CHEBI:15378"/>
        <dbReference type="ChEBI" id="CHEBI:17319"/>
        <dbReference type="ChEBI" id="CHEBI:17499"/>
        <dbReference type="ChEBI" id="CHEBI:29917"/>
        <dbReference type="ChEBI" id="CHEBI:57844"/>
        <dbReference type="ChEBI" id="CHEBI:57856"/>
        <dbReference type="ChEBI" id="CHEBI:59789"/>
        <dbReference type="ChEBI" id="CHEBI:64428"/>
        <dbReference type="ChEBI" id="CHEBI:74415"/>
        <dbReference type="ChEBI" id="CHEBI:74417"/>
        <dbReference type="EC" id="2.8.4.3"/>
    </reaction>
</comment>
<comment type="cofactor">
    <cofactor evidence="1">
        <name>[4Fe-4S] cluster</name>
        <dbReference type="ChEBI" id="CHEBI:49883"/>
    </cofactor>
    <text evidence="1">Binds 2 [4Fe-4S] clusters. One cluster is coordinated with 3 cysteines and an exchangeable S-adenosyl-L-methionine.</text>
</comment>
<comment type="subunit">
    <text evidence="1">Monomer.</text>
</comment>
<comment type="subcellular location">
    <subcellularLocation>
        <location evidence="1">Cytoplasm</location>
    </subcellularLocation>
</comment>
<comment type="similarity">
    <text evidence="1">Belongs to the methylthiotransferase family. MiaB subfamily.</text>
</comment>
<comment type="sequence caution" evidence="3">
    <conflict type="erroneous initiation">
        <sequence resource="EMBL-CDS" id="ABP40998"/>
    </conflict>
</comment>
<evidence type="ECO:0000255" key="1">
    <source>
        <dbReference type="HAMAP-Rule" id="MF_01864"/>
    </source>
</evidence>
<evidence type="ECO:0000255" key="2">
    <source>
        <dbReference type="PROSITE-ProRule" id="PRU01266"/>
    </source>
</evidence>
<evidence type="ECO:0000305" key="3"/>
<proteinExistence type="inferred from homology"/>
<dbReference type="EC" id="2.8.4.3" evidence="1"/>
<dbReference type="EMBL" id="CP000668">
    <property type="protein sequence ID" value="ABP40998.1"/>
    <property type="status" value="ALT_INIT"/>
    <property type="molecule type" value="Genomic_DNA"/>
</dbReference>
<dbReference type="RefSeq" id="WP_002231077.1">
    <property type="nucleotide sequence ID" value="NZ_CP009715.1"/>
</dbReference>
<dbReference type="SMR" id="A4TNY6"/>
<dbReference type="KEGG" id="ypp:YPDSF_2632"/>
<dbReference type="PATRIC" id="fig|386656.14.peg.4159"/>
<dbReference type="GO" id="GO:0005829">
    <property type="term" value="C:cytosol"/>
    <property type="evidence" value="ECO:0007669"/>
    <property type="project" value="TreeGrafter"/>
</dbReference>
<dbReference type="GO" id="GO:0051539">
    <property type="term" value="F:4 iron, 4 sulfur cluster binding"/>
    <property type="evidence" value="ECO:0007669"/>
    <property type="project" value="UniProtKB-UniRule"/>
</dbReference>
<dbReference type="GO" id="GO:0046872">
    <property type="term" value="F:metal ion binding"/>
    <property type="evidence" value="ECO:0007669"/>
    <property type="project" value="UniProtKB-KW"/>
</dbReference>
<dbReference type="GO" id="GO:0035597">
    <property type="term" value="F:N6-isopentenyladenosine methylthiotransferase activity"/>
    <property type="evidence" value="ECO:0007669"/>
    <property type="project" value="TreeGrafter"/>
</dbReference>
<dbReference type="CDD" id="cd01335">
    <property type="entry name" value="Radical_SAM"/>
    <property type="match status" value="1"/>
</dbReference>
<dbReference type="FunFam" id="3.40.50.12160:FF:000001">
    <property type="entry name" value="tRNA-2-methylthio-N(6)-dimethylallyladenosine synthase"/>
    <property type="match status" value="1"/>
</dbReference>
<dbReference type="FunFam" id="3.80.30.20:FF:000001">
    <property type="entry name" value="tRNA-2-methylthio-N(6)-dimethylallyladenosine synthase 2"/>
    <property type="match status" value="1"/>
</dbReference>
<dbReference type="Gene3D" id="3.40.50.12160">
    <property type="entry name" value="Methylthiotransferase, N-terminal domain"/>
    <property type="match status" value="1"/>
</dbReference>
<dbReference type="Gene3D" id="3.80.30.20">
    <property type="entry name" value="tm_1862 like domain"/>
    <property type="match status" value="1"/>
</dbReference>
<dbReference type="HAMAP" id="MF_01864">
    <property type="entry name" value="tRNA_metthiotr_MiaB"/>
    <property type="match status" value="1"/>
</dbReference>
<dbReference type="InterPro" id="IPR006638">
    <property type="entry name" value="Elp3/MiaA/NifB-like_rSAM"/>
</dbReference>
<dbReference type="InterPro" id="IPR005839">
    <property type="entry name" value="Methylthiotransferase"/>
</dbReference>
<dbReference type="InterPro" id="IPR020612">
    <property type="entry name" value="Methylthiotransferase_CS"/>
</dbReference>
<dbReference type="InterPro" id="IPR013848">
    <property type="entry name" value="Methylthiotransferase_N"/>
</dbReference>
<dbReference type="InterPro" id="IPR038135">
    <property type="entry name" value="Methylthiotransferase_N_sf"/>
</dbReference>
<dbReference type="InterPro" id="IPR006463">
    <property type="entry name" value="MiaB_methiolase"/>
</dbReference>
<dbReference type="InterPro" id="IPR007197">
    <property type="entry name" value="rSAM"/>
</dbReference>
<dbReference type="InterPro" id="IPR023404">
    <property type="entry name" value="rSAM_horseshoe"/>
</dbReference>
<dbReference type="InterPro" id="IPR002792">
    <property type="entry name" value="TRAM_dom"/>
</dbReference>
<dbReference type="NCBIfam" id="TIGR01574">
    <property type="entry name" value="miaB-methiolase"/>
    <property type="match status" value="1"/>
</dbReference>
<dbReference type="NCBIfam" id="TIGR00089">
    <property type="entry name" value="MiaB/RimO family radical SAM methylthiotransferase"/>
    <property type="match status" value="1"/>
</dbReference>
<dbReference type="PANTHER" id="PTHR43020">
    <property type="entry name" value="CDK5 REGULATORY SUBUNIT-ASSOCIATED PROTEIN 1"/>
    <property type="match status" value="1"/>
</dbReference>
<dbReference type="PANTHER" id="PTHR43020:SF2">
    <property type="entry name" value="MITOCHONDRIAL TRNA METHYLTHIOTRANSFERASE CDK5RAP1"/>
    <property type="match status" value="1"/>
</dbReference>
<dbReference type="Pfam" id="PF04055">
    <property type="entry name" value="Radical_SAM"/>
    <property type="match status" value="1"/>
</dbReference>
<dbReference type="Pfam" id="PF01938">
    <property type="entry name" value="TRAM"/>
    <property type="match status" value="1"/>
</dbReference>
<dbReference type="Pfam" id="PF00919">
    <property type="entry name" value="UPF0004"/>
    <property type="match status" value="1"/>
</dbReference>
<dbReference type="SFLD" id="SFLDF00273">
    <property type="entry name" value="(dimethylallyl)adenosine_tRNA"/>
    <property type="match status" value="1"/>
</dbReference>
<dbReference type="SFLD" id="SFLDG01082">
    <property type="entry name" value="B12-binding_domain_containing"/>
    <property type="match status" value="1"/>
</dbReference>
<dbReference type="SFLD" id="SFLDG01061">
    <property type="entry name" value="methylthiotransferase"/>
    <property type="match status" value="1"/>
</dbReference>
<dbReference type="SMART" id="SM00729">
    <property type="entry name" value="Elp3"/>
    <property type="match status" value="1"/>
</dbReference>
<dbReference type="SUPFAM" id="SSF102114">
    <property type="entry name" value="Radical SAM enzymes"/>
    <property type="match status" value="1"/>
</dbReference>
<dbReference type="PROSITE" id="PS51449">
    <property type="entry name" value="MTTASE_N"/>
    <property type="match status" value="1"/>
</dbReference>
<dbReference type="PROSITE" id="PS01278">
    <property type="entry name" value="MTTASE_RADICAL"/>
    <property type="match status" value="1"/>
</dbReference>
<dbReference type="PROSITE" id="PS51918">
    <property type="entry name" value="RADICAL_SAM"/>
    <property type="match status" value="1"/>
</dbReference>
<dbReference type="PROSITE" id="PS50926">
    <property type="entry name" value="TRAM"/>
    <property type="match status" value="1"/>
</dbReference>